<name>RECO_LISIN</name>
<protein>
    <recommendedName>
        <fullName>DNA repair protein RecO</fullName>
    </recommendedName>
    <alternativeName>
        <fullName>Recombination protein O</fullName>
    </alternativeName>
</protein>
<accession>Q92BQ0</accession>
<dbReference type="EMBL" id="AL596168">
    <property type="protein sequence ID" value="CAC96728.1"/>
    <property type="molecule type" value="Genomic_DNA"/>
</dbReference>
<dbReference type="PIR" id="AH1619">
    <property type="entry name" value="AH1619"/>
</dbReference>
<dbReference type="RefSeq" id="WP_010991563.1">
    <property type="nucleotide sequence ID" value="NC_003212.1"/>
</dbReference>
<dbReference type="SMR" id="Q92BQ0"/>
<dbReference type="STRING" id="272626.gene:17565828"/>
<dbReference type="GeneID" id="93234878"/>
<dbReference type="KEGG" id="lin:lin1497"/>
<dbReference type="eggNOG" id="COG1381">
    <property type="taxonomic scope" value="Bacteria"/>
</dbReference>
<dbReference type="HOGENOM" id="CLU_066632_4_0_9"/>
<dbReference type="OrthoDB" id="9797083at2"/>
<dbReference type="Proteomes" id="UP000002513">
    <property type="component" value="Chromosome"/>
</dbReference>
<dbReference type="GO" id="GO:0043590">
    <property type="term" value="C:bacterial nucleoid"/>
    <property type="evidence" value="ECO:0007669"/>
    <property type="project" value="TreeGrafter"/>
</dbReference>
<dbReference type="GO" id="GO:0006310">
    <property type="term" value="P:DNA recombination"/>
    <property type="evidence" value="ECO:0007669"/>
    <property type="project" value="UniProtKB-UniRule"/>
</dbReference>
<dbReference type="GO" id="GO:0006302">
    <property type="term" value="P:double-strand break repair"/>
    <property type="evidence" value="ECO:0007669"/>
    <property type="project" value="TreeGrafter"/>
</dbReference>
<dbReference type="Gene3D" id="2.40.50.140">
    <property type="entry name" value="Nucleic acid-binding proteins"/>
    <property type="match status" value="1"/>
</dbReference>
<dbReference type="Gene3D" id="1.20.1440.120">
    <property type="entry name" value="Recombination protein O, C-terminal domain"/>
    <property type="match status" value="1"/>
</dbReference>
<dbReference type="HAMAP" id="MF_00201">
    <property type="entry name" value="RecO"/>
    <property type="match status" value="1"/>
</dbReference>
<dbReference type="InterPro" id="IPR037278">
    <property type="entry name" value="ARFGAP/RecO"/>
</dbReference>
<dbReference type="InterPro" id="IPR022572">
    <property type="entry name" value="DNA_rep/recomb_RecO_N"/>
</dbReference>
<dbReference type="InterPro" id="IPR012340">
    <property type="entry name" value="NA-bd_OB-fold"/>
</dbReference>
<dbReference type="InterPro" id="IPR003717">
    <property type="entry name" value="RecO"/>
</dbReference>
<dbReference type="InterPro" id="IPR042242">
    <property type="entry name" value="RecO_C"/>
</dbReference>
<dbReference type="NCBIfam" id="TIGR00613">
    <property type="entry name" value="reco"/>
    <property type="match status" value="1"/>
</dbReference>
<dbReference type="PANTHER" id="PTHR33991">
    <property type="entry name" value="DNA REPAIR PROTEIN RECO"/>
    <property type="match status" value="1"/>
</dbReference>
<dbReference type="PANTHER" id="PTHR33991:SF1">
    <property type="entry name" value="DNA REPAIR PROTEIN RECO"/>
    <property type="match status" value="1"/>
</dbReference>
<dbReference type="Pfam" id="PF02565">
    <property type="entry name" value="RecO_C"/>
    <property type="match status" value="1"/>
</dbReference>
<dbReference type="Pfam" id="PF11967">
    <property type="entry name" value="RecO_N"/>
    <property type="match status" value="1"/>
</dbReference>
<dbReference type="SUPFAM" id="SSF57863">
    <property type="entry name" value="ArfGap/RecO-like zinc finger"/>
    <property type="match status" value="1"/>
</dbReference>
<dbReference type="SUPFAM" id="SSF50249">
    <property type="entry name" value="Nucleic acid-binding proteins"/>
    <property type="match status" value="1"/>
</dbReference>
<keyword id="KW-0227">DNA damage</keyword>
<keyword id="KW-0233">DNA recombination</keyword>
<keyword id="KW-0234">DNA repair</keyword>
<proteinExistence type="inferred from homology"/>
<organism>
    <name type="scientific">Listeria innocua serovar 6a (strain ATCC BAA-680 / CLIP 11262)</name>
    <dbReference type="NCBI Taxonomy" id="272626"/>
    <lineage>
        <taxon>Bacteria</taxon>
        <taxon>Bacillati</taxon>
        <taxon>Bacillota</taxon>
        <taxon>Bacilli</taxon>
        <taxon>Bacillales</taxon>
        <taxon>Listeriaceae</taxon>
        <taxon>Listeria</taxon>
    </lineage>
</organism>
<evidence type="ECO:0000250" key="1"/>
<evidence type="ECO:0000305" key="2"/>
<sequence length="255" mass="29893">MEKCEGIVIRQTSYRESDKIVRMYTREFGKIGVVARGAKKTKSRLAAVTQLFTNGYFTFFGGNGLGTLQQGEVIENFSSIQQDIFMTAYATYVCELLDKATEERQPNPYLYELTFQILRDIDEGYDPQILTQIYEMKMLPVLGLYPTMDKCAICGETTGHFDFSTRSNGIICHRCFDKDRYRMHLPENVVKLLRLFFIFQLDRLGNIDVKQETKEWLQKAIDTYYDEYSGLYLKSRKFLRDMDKWENMLKKDSDD</sequence>
<feature type="chain" id="PRO_0000204965" description="DNA repair protein RecO">
    <location>
        <begin position="1"/>
        <end position="255"/>
    </location>
</feature>
<gene>
    <name type="primary">recO</name>
    <name type="ordered locus">lin1497</name>
</gene>
<comment type="function">
    <text evidence="1">Involved in DNA repair and RecF pathway recombination.</text>
</comment>
<comment type="similarity">
    <text evidence="2">Belongs to the RecO family.</text>
</comment>
<reference key="1">
    <citation type="journal article" date="2001" name="Science">
        <title>Comparative genomics of Listeria species.</title>
        <authorList>
            <person name="Glaser P."/>
            <person name="Frangeul L."/>
            <person name="Buchrieser C."/>
            <person name="Rusniok C."/>
            <person name="Amend A."/>
            <person name="Baquero F."/>
            <person name="Berche P."/>
            <person name="Bloecker H."/>
            <person name="Brandt P."/>
            <person name="Chakraborty T."/>
            <person name="Charbit A."/>
            <person name="Chetouani F."/>
            <person name="Couve E."/>
            <person name="de Daruvar A."/>
            <person name="Dehoux P."/>
            <person name="Domann E."/>
            <person name="Dominguez-Bernal G."/>
            <person name="Duchaud E."/>
            <person name="Durant L."/>
            <person name="Dussurget O."/>
            <person name="Entian K.-D."/>
            <person name="Fsihi H."/>
            <person name="Garcia-del Portillo F."/>
            <person name="Garrido P."/>
            <person name="Gautier L."/>
            <person name="Goebel W."/>
            <person name="Gomez-Lopez N."/>
            <person name="Hain T."/>
            <person name="Hauf J."/>
            <person name="Jackson D."/>
            <person name="Jones L.-M."/>
            <person name="Kaerst U."/>
            <person name="Kreft J."/>
            <person name="Kuhn M."/>
            <person name="Kunst F."/>
            <person name="Kurapkat G."/>
            <person name="Madueno E."/>
            <person name="Maitournam A."/>
            <person name="Mata Vicente J."/>
            <person name="Ng E."/>
            <person name="Nedjari H."/>
            <person name="Nordsiek G."/>
            <person name="Novella S."/>
            <person name="de Pablos B."/>
            <person name="Perez-Diaz J.-C."/>
            <person name="Purcell R."/>
            <person name="Remmel B."/>
            <person name="Rose M."/>
            <person name="Schlueter T."/>
            <person name="Simoes N."/>
            <person name="Tierrez A."/>
            <person name="Vazquez-Boland J.-A."/>
            <person name="Voss H."/>
            <person name="Wehland J."/>
            <person name="Cossart P."/>
        </authorList>
    </citation>
    <scope>NUCLEOTIDE SEQUENCE [LARGE SCALE GENOMIC DNA]</scope>
    <source>
        <strain>ATCC BAA-680 / CLIP 11262</strain>
    </source>
</reference>